<gene>
    <name type="primary">mmoD</name>
    <name type="ordered locus">MCA1199</name>
</gene>
<reference key="1">
    <citation type="journal article" date="1990" name="Gene">
        <title>The methane monooxygenase gene cluster of Methylococcus capsulatus (Bath).</title>
        <authorList>
            <person name="Stainthorpe A.C."/>
            <person name="Lees V."/>
            <person name="Salmond G.P.C."/>
            <person name="Dalton H."/>
            <person name="Murrell J.C."/>
        </authorList>
    </citation>
    <scope>NUCLEOTIDE SEQUENCE [GENOMIC DNA]</scope>
    <source>
        <strain>ATCC 33009 / NCIMB 11132 / Bath</strain>
    </source>
</reference>
<reference key="2">
    <citation type="journal article" date="2004" name="PLoS Biol.">
        <title>Genomic insights into methanotrophy: the complete genome sequence of Methylococcus capsulatus (Bath).</title>
        <authorList>
            <person name="Ward N.L."/>
            <person name="Larsen O."/>
            <person name="Sakwa J."/>
            <person name="Bruseth L."/>
            <person name="Khouri H.M."/>
            <person name="Durkin A.S."/>
            <person name="Dimitrov G."/>
            <person name="Jiang L."/>
            <person name="Scanlan D."/>
            <person name="Kang K.H."/>
            <person name="Lewis M.R."/>
            <person name="Nelson K.E."/>
            <person name="Methe B.A."/>
            <person name="Wu M."/>
            <person name="Heidelberg J.F."/>
            <person name="Paulsen I.T."/>
            <person name="Fouts D.E."/>
            <person name="Ravel J."/>
            <person name="Tettelin H."/>
            <person name="Ren Q."/>
            <person name="Read T.D."/>
            <person name="DeBoy R.T."/>
            <person name="Seshadri R."/>
            <person name="Salzberg S.L."/>
            <person name="Jensen H.B."/>
            <person name="Birkeland N.K."/>
            <person name="Nelson W.C."/>
            <person name="Dodson R.J."/>
            <person name="Grindhaug S.H."/>
            <person name="Holt I.E."/>
            <person name="Eidhammer I."/>
            <person name="Jonasen I."/>
            <person name="Vanaken S."/>
            <person name="Utterback T.R."/>
            <person name="Feldblyum T.V."/>
            <person name="Fraser C.M."/>
            <person name="Lillehaug J.R."/>
            <person name="Eisen J.A."/>
        </authorList>
    </citation>
    <scope>NUCLEOTIDE SEQUENCE [LARGE SCALE GENOMIC DNA]</scope>
    <source>
        <strain>ATCC 33009 / NCIMB 11132 / Bath</strain>
    </source>
</reference>
<reference key="3">
    <citation type="journal article" date="2002" name="J. Biol. Chem.">
        <title>Why OrfY? Characterization of MMOD, a long overlooked component of the soluble methane monooxygenase from Methylococcus capsulatus.</title>
        <authorList>
            <person name="Merkx M."/>
            <person name="Lippard S.J."/>
        </authorList>
    </citation>
    <scope>PROTEIN SEQUENCE OF 1-5</scope>
    <scope>MASS SPECTROMETRY</scope>
    <scope>CHARACTERIZATION</scope>
    <source>
        <strain>ATCC 33009 / NCIMB 11132 / Bath</strain>
    </source>
</reference>
<proteinExistence type="evidence at protein level"/>
<dbReference type="EMBL" id="M90050">
    <property type="protein sequence ID" value="AAF04159.1"/>
    <property type="molecule type" value="Genomic_DNA"/>
</dbReference>
<dbReference type="EMBL" id="AE017282">
    <property type="protein sequence ID" value="AAU92723.1"/>
    <property type="molecule type" value="Genomic_DNA"/>
</dbReference>
<dbReference type="PIR" id="JQ0700">
    <property type="entry name" value="JQ0700"/>
</dbReference>
<dbReference type="RefSeq" id="WP_010960486.1">
    <property type="nucleotide sequence ID" value="NC_002977.6"/>
</dbReference>
<dbReference type="SMR" id="P22867"/>
<dbReference type="STRING" id="243233.MCA1199"/>
<dbReference type="GeneID" id="88223486"/>
<dbReference type="KEGG" id="mca:MCA1199"/>
<dbReference type="eggNOG" id="ENOG50335AI">
    <property type="taxonomic scope" value="Bacteria"/>
</dbReference>
<dbReference type="HOGENOM" id="CLU_2260423_0_0_6"/>
<dbReference type="BioCyc" id="MetaCyc:MONOMER-3866"/>
<dbReference type="BRENDA" id="1.14.13.25">
    <property type="organism ID" value="3305"/>
</dbReference>
<dbReference type="Proteomes" id="UP000006821">
    <property type="component" value="Chromosome"/>
</dbReference>
<dbReference type="GO" id="GO:0004497">
    <property type="term" value="F:monooxygenase activity"/>
    <property type="evidence" value="ECO:0007669"/>
    <property type="project" value="UniProtKB-KW"/>
</dbReference>
<dbReference type="InterPro" id="IPR017256">
    <property type="entry name" value="MmoD"/>
</dbReference>
<dbReference type="NCBIfam" id="TIGR04550">
    <property type="entry name" value="sMetMonox_MmoD"/>
    <property type="match status" value="1"/>
</dbReference>
<sequence>MVESAFQPFSGDADEWFEEPRPQAGFFPSADWHLLKRDETYAAYAKDLDFMWRWVIVREERIVQEGCSISLESSIRAVTHVLNYFGMTEQRAPAEDRTGGVQH</sequence>
<name>MMOD_METCA</name>
<organism>
    <name type="scientific">Methylococcus capsulatus (strain ATCC 33009 / NCIMB 11132 / Bath)</name>
    <dbReference type="NCBI Taxonomy" id="243233"/>
    <lineage>
        <taxon>Bacteria</taxon>
        <taxon>Pseudomonadati</taxon>
        <taxon>Pseudomonadota</taxon>
        <taxon>Gammaproteobacteria</taxon>
        <taxon>Methylococcales</taxon>
        <taxon>Methylococcaceae</taxon>
        <taxon>Methylococcus</taxon>
    </lineage>
</organism>
<protein>
    <recommendedName>
        <fullName>Methane monooxygenase component D</fullName>
    </recommendedName>
</protein>
<keyword id="KW-0903">Direct protein sequencing</keyword>
<keyword id="KW-0503">Monooxygenase</keyword>
<keyword id="KW-0560">Oxidoreductase</keyword>
<keyword id="KW-1185">Reference proteome</keyword>
<feature type="chain" id="PRO_0000096509" description="Methane monooxygenase component D">
    <location>
        <begin position="1"/>
        <end position="103"/>
    </location>
</feature>
<evidence type="ECO:0000269" key="1">
    <source>
    </source>
</evidence>
<accession>P22867</accession>
<accession>Q609N3</accession>
<comment type="subunit">
    <text>The soluble methane monooxygenase (sMMO) consists of four components A/MMOH (composed of alpha/MmoX, beta/MmoY and gamma/MmoZ), B/MMOB (MmoB), C/MMOR (MmoC) and D/MMOD (MmoD).</text>
</comment>
<comment type="mass spectrometry"/>